<proteinExistence type="inferred from homology"/>
<name>TESA_MYCLE</name>
<sequence length="261" mass="28950">MLHVLRPGYAGAVNGHSNNGNDDETSTTPTLYIFPHAGGDATYYVPFSREFSADIKRIAVHYPGQRDGYGLPALTSIPALADEIFAIMKPSAPPEGAVAFFGHSMGGMLAFEVALRFQSAGYRLIALFVSACSAPGYIRYKQIKDFSDNDMLDLVVRMTGMNPDFFEDEEFRVGVLPTLRAARIIAGYNCPPETTVSCPIYTYIGDKDWIATQEDMKPWRERTTGAFAIRVFPGDHFYLNGNLSELVCDIEDKTLEWCDRA</sequence>
<feature type="chain" id="PRO_0000180367" description="Thioesterase TesA">
    <location>
        <begin position="1"/>
        <end position="261"/>
    </location>
</feature>
<feature type="active site" evidence="1">
    <location>
        <position position="104"/>
    </location>
</feature>
<feature type="active site" evidence="1">
    <location>
        <position position="208"/>
    </location>
</feature>
<feature type="active site" evidence="1">
    <location>
        <position position="236"/>
    </location>
</feature>
<evidence type="ECO:0000250" key="1">
    <source>
        <dbReference type="UniProtKB" id="P9WQD5"/>
    </source>
</evidence>
<evidence type="ECO:0000305" key="2"/>
<reference key="1">
    <citation type="journal article" date="2001" name="Nature">
        <title>Massive gene decay in the leprosy bacillus.</title>
        <authorList>
            <person name="Cole S.T."/>
            <person name="Eiglmeier K."/>
            <person name="Parkhill J."/>
            <person name="James K.D."/>
            <person name="Thomson N.R."/>
            <person name="Wheeler P.R."/>
            <person name="Honore N."/>
            <person name="Garnier T."/>
            <person name="Churcher C.M."/>
            <person name="Harris D.E."/>
            <person name="Mungall K.L."/>
            <person name="Basham D."/>
            <person name="Brown D."/>
            <person name="Chillingworth T."/>
            <person name="Connor R."/>
            <person name="Davies R.M."/>
            <person name="Devlin K."/>
            <person name="Duthoy S."/>
            <person name="Feltwell T."/>
            <person name="Fraser A."/>
            <person name="Hamlin N."/>
            <person name="Holroyd S."/>
            <person name="Hornsby T."/>
            <person name="Jagels K."/>
            <person name="Lacroix C."/>
            <person name="Maclean J."/>
            <person name="Moule S."/>
            <person name="Murphy L.D."/>
            <person name="Oliver K."/>
            <person name="Quail M.A."/>
            <person name="Rajandream M.A."/>
            <person name="Rutherford K.M."/>
            <person name="Rutter S."/>
            <person name="Seeger K."/>
            <person name="Simon S."/>
            <person name="Simmonds M."/>
            <person name="Skelton J."/>
            <person name="Squares R."/>
            <person name="Squares S."/>
            <person name="Stevens K."/>
            <person name="Taylor K."/>
            <person name="Whitehead S."/>
            <person name="Woodward J.R."/>
            <person name="Barrell B.G."/>
        </authorList>
    </citation>
    <scope>NUCLEOTIDE SEQUENCE [LARGE SCALE GENOMIC DNA]</scope>
    <source>
        <strain>TN</strain>
    </source>
</reference>
<keyword id="KW-0378">Hydrolase</keyword>
<keyword id="KW-0444">Lipid biosynthesis</keyword>
<keyword id="KW-0443">Lipid metabolism</keyword>
<keyword id="KW-1185">Reference proteome</keyword>
<keyword id="KW-0843">Virulence</keyword>
<dbReference type="EC" id="3.1.2.-" evidence="1"/>
<dbReference type="EMBL" id="AL035480">
    <property type="protein sequence ID" value="CAB36630.1"/>
    <property type="molecule type" value="Genomic_DNA"/>
</dbReference>
<dbReference type="EMBL" id="AL583925">
    <property type="protein sequence ID" value="CAC31875.1"/>
    <property type="molecule type" value="Genomic_DNA"/>
</dbReference>
<dbReference type="PIR" id="C87204">
    <property type="entry name" value="C87204"/>
</dbReference>
<dbReference type="RefSeq" id="NP_302538.1">
    <property type="nucleotide sequence ID" value="NC_002677.1"/>
</dbReference>
<dbReference type="RefSeq" id="WP_010908858.1">
    <property type="nucleotide sequence ID" value="NC_002677.1"/>
</dbReference>
<dbReference type="SMR" id="Q9Z5K4"/>
<dbReference type="STRING" id="272631.gene:17576221"/>
<dbReference type="ESTHER" id="mycle-ML2359">
    <property type="family name" value="Thioesterase"/>
</dbReference>
<dbReference type="KEGG" id="mle:ML2359"/>
<dbReference type="PATRIC" id="fig|272631.5.peg.4518"/>
<dbReference type="Leproma" id="ML2359"/>
<dbReference type="eggNOG" id="COG3208">
    <property type="taxonomic scope" value="Bacteria"/>
</dbReference>
<dbReference type="HOGENOM" id="CLU_070456_1_2_11"/>
<dbReference type="OrthoDB" id="8480037at2"/>
<dbReference type="Proteomes" id="UP000000806">
    <property type="component" value="Chromosome"/>
</dbReference>
<dbReference type="GO" id="GO:0047617">
    <property type="term" value="F:fatty acyl-CoA hydrolase activity"/>
    <property type="evidence" value="ECO:0007669"/>
    <property type="project" value="RHEA"/>
</dbReference>
<dbReference type="GO" id="GO:0008610">
    <property type="term" value="P:lipid biosynthetic process"/>
    <property type="evidence" value="ECO:0007669"/>
    <property type="project" value="TreeGrafter"/>
</dbReference>
<dbReference type="Gene3D" id="3.40.50.1820">
    <property type="entry name" value="alpha/beta hydrolase"/>
    <property type="match status" value="1"/>
</dbReference>
<dbReference type="InterPro" id="IPR029058">
    <property type="entry name" value="AB_hydrolase_fold"/>
</dbReference>
<dbReference type="InterPro" id="IPR012223">
    <property type="entry name" value="TEII"/>
</dbReference>
<dbReference type="InterPro" id="IPR001031">
    <property type="entry name" value="Thioesterase"/>
</dbReference>
<dbReference type="PANTHER" id="PTHR11487:SF0">
    <property type="entry name" value="S-ACYL FATTY ACID SYNTHASE THIOESTERASE, MEDIUM CHAIN"/>
    <property type="match status" value="1"/>
</dbReference>
<dbReference type="PANTHER" id="PTHR11487">
    <property type="entry name" value="THIOESTERASE"/>
    <property type="match status" value="1"/>
</dbReference>
<dbReference type="Pfam" id="PF00975">
    <property type="entry name" value="Thioesterase"/>
    <property type="match status" value="1"/>
</dbReference>
<dbReference type="SUPFAM" id="SSF53474">
    <property type="entry name" value="alpha/beta-Hydrolases"/>
    <property type="match status" value="1"/>
</dbReference>
<protein>
    <recommendedName>
        <fullName evidence="1">Thioesterase TesA</fullName>
        <ecNumber evidence="1">3.1.2.-</ecNumber>
    </recommendedName>
</protein>
<organism>
    <name type="scientific">Mycobacterium leprae (strain TN)</name>
    <dbReference type="NCBI Taxonomy" id="272631"/>
    <lineage>
        <taxon>Bacteria</taxon>
        <taxon>Bacillati</taxon>
        <taxon>Actinomycetota</taxon>
        <taxon>Actinomycetes</taxon>
        <taxon>Mycobacteriales</taxon>
        <taxon>Mycobacteriaceae</taxon>
        <taxon>Mycobacterium</taxon>
    </lineage>
</organism>
<comment type="function">
    <text evidence="1">Involved in the synthesis of both phthiocerol dimycocerosates (PDIMs) and phenolic glycolipids (PGLs), which are structurally related lipids non-covalently bound to the outer cell wall layer of M.tuberculosis and are important virulence factors.</text>
</comment>
<comment type="catalytic activity">
    <reaction evidence="1">
        <text>a fatty acyl-CoA + H2O = a fatty acid + CoA + H(+)</text>
        <dbReference type="Rhea" id="RHEA:16781"/>
        <dbReference type="ChEBI" id="CHEBI:15377"/>
        <dbReference type="ChEBI" id="CHEBI:15378"/>
        <dbReference type="ChEBI" id="CHEBI:28868"/>
        <dbReference type="ChEBI" id="CHEBI:57287"/>
        <dbReference type="ChEBI" id="CHEBI:77636"/>
    </reaction>
</comment>
<comment type="similarity">
    <text evidence="2">Belongs to the thioesterase family.</text>
</comment>
<gene>
    <name type="primary">tesA</name>
    <name type="ordered locus">ML2359</name>
    <name type="ORF">MLCB12.04c</name>
</gene>
<accession>Q9Z5K4</accession>